<accession>B0RQM8</accession>
<evidence type="ECO:0000255" key="1">
    <source>
        <dbReference type="HAMAP-Rule" id="MF_00758"/>
    </source>
</evidence>
<name>Y1413_XANCB</name>
<feature type="chain" id="PRO_1000198306" description="UPF0301 protein xcc-b100_1413">
    <location>
        <begin position="1"/>
        <end position="188"/>
    </location>
</feature>
<dbReference type="EMBL" id="AM920689">
    <property type="protein sequence ID" value="CAP50763.1"/>
    <property type="molecule type" value="Genomic_DNA"/>
</dbReference>
<dbReference type="SMR" id="B0RQM8"/>
<dbReference type="KEGG" id="xca:xcc-b100_1413"/>
<dbReference type="HOGENOM" id="CLU_057596_1_0_6"/>
<dbReference type="Proteomes" id="UP000001188">
    <property type="component" value="Chromosome"/>
</dbReference>
<dbReference type="GO" id="GO:0005829">
    <property type="term" value="C:cytosol"/>
    <property type="evidence" value="ECO:0007669"/>
    <property type="project" value="TreeGrafter"/>
</dbReference>
<dbReference type="Gene3D" id="3.40.1740.10">
    <property type="entry name" value="VC0467-like"/>
    <property type="match status" value="1"/>
</dbReference>
<dbReference type="HAMAP" id="MF_00758">
    <property type="entry name" value="UPF0301"/>
    <property type="match status" value="1"/>
</dbReference>
<dbReference type="InterPro" id="IPR003774">
    <property type="entry name" value="AlgH-like"/>
</dbReference>
<dbReference type="NCBIfam" id="NF001266">
    <property type="entry name" value="PRK00228.1-1"/>
    <property type="match status" value="1"/>
</dbReference>
<dbReference type="PANTHER" id="PTHR30327">
    <property type="entry name" value="UNCHARACTERIZED PROTEIN YQGE"/>
    <property type="match status" value="1"/>
</dbReference>
<dbReference type="PANTHER" id="PTHR30327:SF1">
    <property type="entry name" value="UPF0301 PROTEIN YQGE"/>
    <property type="match status" value="1"/>
</dbReference>
<dbReference type="Pfam" id="PF02622">
    <property type="entry name" value="DUF179"/>
    <property type="match status" value="1"/>
</dbReference>
<dbReference type="SUPFAM" id="SSF143456">
    <property type="entry name" value="VC0467-like"/>
    <property type="match status" value="1"/>
</dbReference>
<proteinExistence type="inferred from homology"/>
<organism>
    <name type="scientific">Xanthomonas campestris pv. campestris (strain B100)</name>
    <dbReference type="NCBI Taxonomy" id="509169"/>
    <lineage>
        <taxon>Bacteria</taxon>
        <taxon>Pseudomonadati</taxon>
        <taxon>Pseudomonadota</taxon>
        <taxon>Gammaproteobacteria</taxon>
        <taxon>Lysobacterales</taxon>
        <taxon>Lysobacteraceae</taxon>
        <taxon>Xanthomonas</taxon>
    </lineage>
</organism>
<sequence length="188" mass="20118">MSVLPTPLANQLLIALPALSDPTFSRSVALICQHDENGAMGVLVNRPSEYTLGEVLSQMGIDTSDERLREQPVLSGGPVHPERGFVIHDDARAWDSSLEVGQGVYLTTSRDILEAMAAGDGPRNALVALGCAGWGAGQLEFELGENSWLTAPSDANVLFDTALEDRWQTAAGRIGVDLFRLTDYSGHA</sequence>
<reference key="1">
    <citation type="journal article" date="2008" name="J. Biotechnol.">
        <title>The genome of Xanthomonas campestris pv. campestris B100 and its use for the reconstruction of metabolic pathways involved in xanthan biosynthesis.</title>
        <authorList>
            <person name="Vorhoelter F.-J."/>
            <person name="Schneiker S."/>
            <person name="Goesmann A."/>
            <person name="Krause L."/>
            <person name="Bekel T."/>
            <person name="Kaiser O."/>
            <person name="Linke B."/>
            <person name="Patschkowski T."/>
            <person name="Rueckert C."/>
            <person name="Schmid J."/>
            <person name="Sidhu V.K."/>
            <person name="Sieber V."/>
            <person name="Tauch A."/>
            <person name="Watt S.A."/>
            <person name="Weisshaar B."/>
            <person name="Becker A."/>
            <person name="Niehaus K."/>
            <person name="Puehler A."/>
        </authorList>
    </citation>
    <scope>NUCLEOTIDE SEQUENCE [LARGE SCALE GENOMIC DNA]</scope>
    <source>
        <strain>B100</strain>
    </source>
</reference>
<gene>
    <name type="ordered locus">xcc-b100_1413</name>
</gene>
<comment type="similarity">
    <text evidence="1">Belongs to the UPF0301 (AlgH) family.</text>
</comment>
<protein>
    <recommendedName>
        <fullName evidence="1">UPF0301 protein xcc-b100_1413</fullName>
    </recommendedName>
</protein>